<evidence type="ECO:0000250" key="1">
    <source>
        <dbReference type="UniProtKB" id="P0ACB0"/>
    </source>
</evidence>
<evidence type="ECO:0000255" key="2">
    <source>
        <dbReference type="PROSITE-ProRule" id="PRU00596"/>
    </source>
</evidence>
<evidence type="ECO:0000305" key="3"/>
<protein>
    <recommendedName>
        <fullName>Replicative DNA helicase DnaB</fullName>
        <ecNumber evidence="1">5.6.2.3</ecNumber>
    </recommendedName>
    <alternativeName>
        <fullName evidence="3">DNA 5'-3' helicase DnaB</fullName>
    </alternativeName>
</protein>
<name>DNAB_RICPR</name>
<organism>
    <name type="scientific">Rickettsia prowazekii (strain Madrid E)</name>
    <dbReference type="NCBI Taxonomy" id="272947"/>
    <lineage>
        <taxon>Bacteria</taxon>
        <taxon>Pseudomonadati</taxon>
        <taxon>Pseudomonadota</taxon>
        <taxon>Alphaproteobacteria</taxon>
        <taxon>Rickettsiales</taxon>
        <taxon>Rickettsiaceae</taxon>
        <taxon>Rickettsieae</taxon>
        <taxon>Rickettsia</taxon>
        <taxon>typhus group</taxon>
    </lineage>
</organism>
<keyword id="KW-0067">ATP-binding</keyword>
<keyword id="KW-0235">DNA replication</keyword>
<keyword id="KW-0238">DNA-binding</keyword>
<keyword id="KW-0347">Helicase</keyword>
<keyword id="KW-0378">Hydrolase</keyword>
<keyword id="KW-0413">Isomerase</keyword>
<keyword id="KW-0547">Nucleotide-binding</keyword>
<keyword id="KW-0639">Primosome</keyword>
<keyword id="KW-1185">Reference proteome</keyword>
<dbReference type="EC" id="5.6.2.3" evidence="1"/>
<dbReference type="EMBL" id="AJ235272">
    <property type="protein sequence ID" value="CAA14991.1"/>
    <property type="molecule type" value="Genomic_DNA"/>
</dbReference>
<dbReference type="PIR" id="E71658">
    <property type="entry name" value="E71658"/>
</dbReference>
<dbReference type="RefSeq" id="NP_220915.1">
    <property type="nucleotide sequence ID" value="NC_000963.1"/>
</dbReference>
<dbReference type="RefSeq" id="WP_004597833.1">
    <property type="nucleotide sequence ID" value="NC_000963.1"/>
</dbReference>
<dbReference type="SMR" id="Q9ZD08"/>
<dbReference type="STRING" id="272947.gene:17555622"/>
<dbReference type="EnsemblBacteria" id="CAA14991">
    <property type="protein sequence ID" value="CAA14991"/>
    <property type="gene ID" value="CAA14991"/>
</dbReference>
<dbReference type="KEGG" id="rpr:RP542"/>
<dbReference type="PATRIC" id="fig|272947.5.peg.553"/>
<dbReference type="eggNOG" id="COG0305">
    <property type="taxonomic scope" value="Bacteria"/>
</dbReference>
<dbReference type="HOGENOM" id="CLU_005373_0_2_5"/>
<dbReference type="OrthoDB" id="9773982at2"/>
<dbReference type="Proteomes" id="UP000002480">
    <property type="component" value="Chromosome"/>
</dbReference>
<dbReference type="GO" id="GO:0005829">
    <property type="term" value="C:cytosol"/>
    <property type="evidence" value="ECO:0007669"/>
    <property type="project" value="TreeGrafter"/>
</dbReference>
<dbReference type="GO" id="GO:1990077">
    <property type="term" value="C:primosome complex"/>
    <property type="evidence" value="ECO:0007669"/>
    <property type="project" value="UniProtKB-KW"/>
</dbReference>
<dbReference type="GO" id="GO:0005524">
    <property type="term" value="F:ATP binding"/>
    <property type="evidence" value="ECO:0007669"/>
    <property type="project" value="UniProtKB-KW"/>
</dbReference>
<dbReference type="GO" id="GO:0016887">
    <property type="term" value="F:ATP hydrolysis activity"/>
    <property type="evidence" value="ECO:0007669"/>
    <property type="project" value="RHEA"/>
</dbReference>
<dbReference type="GO" id="GO:0003677">
    <property type="term" value="F:DNA binding"/>
    <property type="evidence" value="ECO:0007669"/>
    <property type="project" value="UniProtKB-KW"/>
</dbReference>
<dbReference type="GO" id="GO:0003678">
    <property type="term" value="F:DNA helicase activity"/>
    <property type="evidence" value="ECO:0007669"/>
    <property type="project" value="InterPro"/>
</dbReference>
<dbReference type="GO" id="GO:0006269">
    <property type="term" value="P:DNA replication, synthesis of primer"/>
    <property type="evidence" value="ECO:0007669"/>
    <property type="project" value="UniProtKB-KW"/>
</dbReference>
<dbReference type="CDD" id="cd00984">
    <property type="entry name" value="DnaB_C"/>
    <property type="match status" value="1"/>
</dbReference>
<dbReference type="Gene3D" id="1.10.860.10">
    <property type="entry name" value="DNAb Helicase, Chain A"/>
    <property type="match status" value="1"/>
</dbReference>
<dbReference type="Gene3D" id="3.40.50.300">
    <property type="entry name" value="P-loop containing nucleotide triphosphate hydrolases"/>
    <property type="match status" value="1"/>
</dbReference>
<dbReference type="InterPro" id="IPR036185">
    <property type="entry name" value="DNA_heli_DnaB-like_N_sf"/>
</dbReference>
<dbReference type="InterPro" id="IPR007692">
    <property type="entry name" value="DNA_helicase_DnaB"/>
</dbReference>
<dbReference type="InterPro" id="IPR007694">
    <property type="entry name" value="DNA_helicase_DnaB-like_C"/>
</dbReference>
<dbReference type="InterPro" id="IPR007693">
    <property type="entry name" value="DNA_helicase_DnaB-like_N"/>
</dbReference>
<dbReference type="InterPro" id="IPR016136">
    <property type="entry name" value="DNA_helicase_N/primase_C"/>
</dbReference>
<dbReference type="InterPro" id="IPR027417">
    <property type="entry name" value="P-loop_NTPase"/>
</dbReference>
<dbReference type="NCBIfam" id="TIGR00665">
    <property type="entry name" value="DnaB"/>
    <property type="match status" value="1"/>
</dbReference>
<dbReference type="NCBIfam" id="NF006606">
    <property type="entry name" value="PRK09165.1"/>
    <property type="match status" value="1"/>
</dbReference>
<dbReference type="PANTHER" id="PTHR30153:SF2">
    <property type="entry name" value="REPLICATIVE DNA HELICASE"/>
    <property type="match status" value="1"/>
</dbReference>
<dbReference type="PANTHER" id="PTHR30153">
    <property type="entry name" value="REPLICATIVE DNA HELICASE DNAB"/>
    <property type="match status" value="1"/>
</dbReference>
<dbReference type="Pfam" id="PF00772">
    <property type="entry name" value="DnaB"/>
    <property type="match status" value="1"/>
</dbReference>
<dbReference type="Pfam" id="PF03796">
    <property type="entry name" value="DnaB_C"/>
    <property type="match status" value="1"/>
</dbReference>
<dbReference type="SUPFAM" id="SSF48024">
    <property type="entry name" value="N-terminal domain of DnaB helicase"/>
    <property type="match status" value="1"/>
</dbReference>
<dbReference type="SUPFAM" id="SSF52540">
    <property type="entry name" value="P-loop containing nucleoside triphosphate hydrolases"/>
    <property type="match status" value="1"/>
</dbReference>
<dbReference type="PROSITE" id="PS51199">
    <property type="entry name" value="SF4_HELICASE"/>
    <property type="match status" value="1"/>
</dbReference>
<gene>
    <name type="primary">dnaB</name>
    <name type="ordered locus">RP542</name>
</gene>
<reference key="1">
    <citation type="journal article" date="1998" name="Nature">
        <title>The genome sequence of Rickettsia prowazekii and the origin of mitochondria.</title>
        <authorList>
            <person name="Andersson S.G.E."/>
            <person name="Zomorodipour A."/>
            <person name="Andersson J.O."/>
            <person name="Sicheritz-Ponten T."/>
            <person name="Alsmark U.C.M."/>
            <person name="Podowski R.M."/>
            <person name="Naeslund A.K."/>
            <person name="Eriksson A.-S."/>
            <person name="Winkler H.H."/>
            <person name="Kurland C.G."/>
        </authorList>
    </citation>
    <scope>NUCLEOTIDE SEQUENCE [LARGE SCALE GENOMIC DNA]</scope>
    <source>
        <strain>Madrid E</strain>
    </source>
</reference>
<comment type="function">
    <text evidence="1">The main replicative DNA helicase, it participates in initiation and elongation during chromosome replication. Travels ahead of the DNA replisome, separating dsDNA into templates for DNA synthesis. A processive ATP-dependent 5'-3' DNA helicase it has DNA-dependent ATPase activity.</text>
</comment>
<comment type="catalytic activity">
    <reaction evidence="1">
        <text>Couples ATP hydrolysis with the unwinding of duplex DNA at the replication fork by translocating in the 5'-3' direction. This creates two antiparallel DNA single strands (ssDNA). The leading ssDNA polymer is the template for DNA polymerase III holoenzyme which synthesizes a continuous strand.</text>
        <dbReference type="EC" id="5.6.2.3"/>
    </reaction>
</comment>
<comment type="catalytic activity">
    <reaction evidence="1">
        <text>ATP + H2O = ADP + phosphate + H(+)</text>
        <dbReference type="Rhea" id="RHEA:13065"/>
        <dbReference type="ChEBI" id="CHEBI:15377"/>
        <dbReference type="ChEBI" id="CHEBI:15378"/>
        <dbReference type="ChEBI" id="CHEBI:30616"/>
        <dbReference type="ChEBI" id="CHEBI:43474"/>
        <dbReference type="ChEBI" id="CHEBI:456216"/>
        <dbReference type="EC" id="5.6.2.3"/>
    </reaction>
</comment>
<comment type="subunit">
    <text evidence="1">Homohexamer.</text>
</comment>
<comment type="similarity">
    <text evidence="3">Belongs to the helicase family. DnaB subfamily.</text>
</comment>
<sequence>MVRNKINNDDNLSIPRVLPSNIQAEQMLLGAIITNNALLSYVSEFLRNEHFFEPIHQKIYDAIEKIIEKGLIATPITLRSMLTQDALFKEIEGEGYLAKLITMSMMVINPIDYGKIIYDLAIKRNLINIGEEVVNNAYNSSLAVAAKEQIEYAEAKLYDLTKEGLNEKSFTKVGISISESLASINRAMKNNDHVIGISTGLLDLDNKLFGFHNSDLIILAGRPSMGKTAFAINLALNTCNNMRLKNIRDNQEIKSVGFFSLEMSSEQLTTRLLSLCAEIDSTALRTGMLSEDKYNRLRKEANTLSELQFFIDDTPALSISAIRTRARRMKRKHNLGILFIDYLQLIRGVSKSENRVNEISEITQGLKAIAKELNIPVIALSQLSRAVELREDKKPMLSDLRESGTIEQDADIVMFIYREEYYLTRKEPVAGDAKHAEWLDKLNKVYNIADIIIAKHRNGPVGNVSLYYDSQFSKFGNLEKRTFNSI</sequence>
<feature type="chain" id="PRO_0000102029" description="Replicative DNA helicase DnaB">
    <location>
        <begin position="1"/>
        <end position="486"/>
    </location>
</feature>
<feature type="domain" description="SF4 helicase" evidence="2">
    <location>
        <begin position="190"/>
        <end position="482"/>
    </location>
</feature>
<feature type="binding site" evidence="2">
    <location>
        <begin position="221"/>
        <end position="228"/>
    </location>
    <ligand>
        <name>ATP</name>
        <dbReference type="ChEBI" id="CHEBI:30616"/>
    </ligand>
</feature>
<proteinExistence type="inferred from homology"/>
<accession>Q9ZD08</accession>